<dbReference type="EC" id="3.1.26.11" evidence="1"/>
<dbReference type="EMBL" id="CP000805">
    <property type="protein sequence ID" value="ACD71236.1"/>
    <property type="molecule type" value="Genomic_DNA"/>
</dbReference>
<dbReference type="SMR" id="B2S457"/>
<dbReference type="KEGG" id="tpp:TPASS_0819"/>
<dbReference type="PATRIC" id="fig|455434.6.peg.807"/>
<dbReference type="Proteomes" id="UP000001202">
    <property type="component" value="Chromosome"/>
</dbReference>
<dbReference type="GO" id="GO:0042781">
    <property type="term" value="F:3'-tRNA processing endoribonuclease activity"/>
    <property type="evidence" value="ECO:0007669"/>
    <property type="project" value="UniProtKB-UniRule"/>
</dbReference>
<dbReference type="GO" id="GO:0008270">
    <property type="term" value="F:zinc ion binding"/>
    <property type="evidence" value="ECO:0007669"/>
    <property type="project" value="UniProtKB-UniRule"/>
</dbReference>
<dbReference type="CDD" id="cd07717">
    <property type="entry name" value="RNaseZ_ZiPD-like_MBL-fold"/>
    <property type="match status" value="1"/>
</dbReference>
<dbReference type="Gene3D" id="3.60.15.10">
    <property type="entry name" value="Ribonuclease Z/Hydroxyacylglutathione hydrolase-like"/>
    <property type="match status" value="1"/>
</dbReference>
<dbReference type="HAMAP" id="MF_01818">
    <property type="entry name" value="RNase_Z_BN"/>
    <property type="match status" value="1"/>
</dbReference>
<dbReference type="InterPro" id="IPR001279">
    <property type="entry name" value="Metallo-B-lactamas"/>
</dbReference>
<dbReference type="InterPro" id="IPR036866">
    <property type="entry name" value="RibonucZ/Hydroxyglut_hydro"/>
</dbReference>
<dbReference type="InterPro" id="IPR013471">
    <property type="entry name" value="RNase_Z/BN"/>
</dbReference>
<dbReference type="NCBIfam" id="NF000801">
    <property type="entry name" value="PRK00055.1-3"/>
    <property type="match status" value="1"/>
</dbReference>
<dbReference type="NCBIfam" id="TIGR02651">
    <property type="entry name" value="RNase_Z"/>
    <property type="match status" value="1"/>
</dbReference>
<dbReference type="PANTHER" id="PTHR46018">
    <property type="entry name" value="ZINC PHOSPHODIESTERASE ELAC PROTEIN 1"/>
    <property type="match status" value="1"/>
</dbReference>
<dbReference type="PANTHER" id="PTHR46018:SF2">
    <property type="entry name" value="ZINC PHOSPHODIESTERASE ELAC PROTEIN 1"/>
    <property type="match status" value="1"/>
</dbReference>
<dbReference type="Pfam" id="PF00753">
    <property type="entry name" value="Lactamase_B"/>
    <property type="match status" value="1"/>
</dbReference>
<dbReference type="Pfam" id="PF12706">
    <property type="entry name" value="Lactamase_B_2"/>
    <property type="match status" value="1"/>
</dbReference>
<dbReference type="SMART" id="SM00849">
    <property type="entry name" value="Lactamase_B"/>
    <property type="match status" value="1"/>
</dbReference>
<dbReference type="SUPFAM" id="SSF56281">
    <property type="entry name" value="Metallo-hydrolase/oxidoreductase"/>
    <property type="match status" value="1"/>
</dbReference>
<protein>
    <recommendedName>
        <fullName evidence="1">Ribonuclease Z</fullName>
        <shortName evidence="1">RNase Z</shortName>
        <ecNumber evidence="1">3.1.26.11</ecNumber>
    </recommendedName>
    <alternativeName>
        <fullName evidence="1">tRNA 3 endonuclease</fullName>
    </alternativeName>
    <alternativeName>
        <fullName evidence="1">tRNase Z</fullName>
    </alternativeName>
</protein>
<name>RNZ_TREPS</name>
<evidence type="ECO:0000255" key="1">
    <source>
        <dbReference type="HAMAP-Rule" id="MF_01818"/>
    </source>
</evidence>
<feature type="chain" id="PRO_1000188005" description="Ribonuclease Z">
    <location>
        <begin position="1"/>
        <end position="310"/>
    </location>
</feature>
<feature type="active site" description="Proton acceptor" evidence="1">
    <location>
        <position position="68"/>
    </location>
</feature>
<feature type="binding site" evidence="1">
    <location>
        <position position="64"/>
    </location>
    <ligand>
        <name>Zn(2+)</name>
        <dbReference type="ChEBI" id="CHEBI:29105"/>
        <label>1</label>
        <note>catalytic</note>
    </ligand>
</feature>
<feature type="binding site" evidence="1">
    <location>
        <position position="66"/>
    </location>
    <ligand>
        <name>Zn(2+)</name>
        <dbReference type="ChEBI" id="CHEBI:29105"/>
        <label>1</label>
        <note>catalytic</note>
    </ligand>
</feature>
<feature type="binding site" evidence="1">
    <location>
        <position position="68"/>
    </location>
    <ligand>
        <name>Zn(2+)</name>
        <dbReference type="ChEBI" id="CHEBI:29105"/>
        <label>2</label>
        <note>catalytic</note>
    </ligand>
</feature>
<feature type="binding site" evidence="1">
    <location>
        <position position="69"/>
    </location>
    <ligand>
        <name>Zn(2+)</name>
        <dbReference type="ChEBI" id="CHEBI:29105"/>
        <label>2</label>
        <note>catalytic</note>
    </ligand>
</feature>
<feature type="binding site" evidence="1">
    <location>
        <position position="142"/>
    </location>
    <ligand>
        <name>Zn(2+)</name>
        <dbReference type="ChEBI" id="CHEBI:29105"/>
        <label>1</label>
        <note>catalytic</note>
    </ligand>
</feature>
<feature type="binding site" evidence="1">
    <location>
        <position position="213"/>
    </location>
    <ligand>
        <name>Zn(2+)</name>
        <dbReference type="ChEBI" id="CHEBI:29105"/>
        <label>1</label>
        <note>catalytic</note>
    </ligand>
</feature>
<feature type="binding site" evidence="1">
    <location>
        <position position="213"/>
    </location>
    <ligand>
        <name>Zn(2+)</name>
        <dbReference type="ChEBI" id="CHEBI:29105"/>
        <label>2</label>
        <note>catalytic</note>
    </ligand>
</feature>
<feature type="binding site" evidence="1">
    <location>
        <position position="271"/>
    </location>
    <ligand>
        <name>Zn(2+)</name>
        <dbReference type="ChEBI" id="CHEBI:29105"/>
        <label>2</label>
        <note>catalytic</note>
    </ligand>
</feature>
<proteinExistence type="inferred from homology"/>
<gene>
    <name evidence="1" type="primary">rnz</name>
    <name type="ordered locus">TPASS_0819</name>
</gene>
<keyword id="KW-0255">Endonuclease</keyword>
<keyword id="KW-0378">Hydrolase</keyword>
<keyword id="KW-0479">Metal-binding</keyword>
<keyword id="KW-0540">Nuclease</keyword>
<keyword id="KW-0819">tRNA processing</keyword>
<keyword id="KW-0862">Zinc</keyword>
<comment type="function">
    <text evidence="1">Zinc phosphodiesterase, which displays some tRNA 3'-processing endonuclease activity. Probably involved in tRNA maturation, by removing a 3'-trailer from precursor tRNA.</text>
</comment>
<comment type="catalytic activity">
    <reaction evidence="1">
        <text>Endonucleolytic cleavage of RNA, removing extra 3' nucleotides from tRNA precursor, generating 3' termini of tRNAs. A 3'-hydroxy group is left at the tRNA terminus and a 5'-phosphoryl group is left at the trailer molecule.</text>
        <dbReference type="EC" id="3.1.26.11"/>
    </reaction>
</comment>
<comment type="cofactor">
    <cofactor evidence="1">
        <name>Zn(2+)</name>
        <dbReference type="ChEBI" id="CHEBI:29105"/>
    </cofactor>
    <text evidence="1">Binds 2 Zn(2+) ions.</text>
</comment>
<comment type="subunit">
    <text evidence="1">Homodimer.</text>
</comment>
<comment type="similarity">
    <text evidence="1">Belongs to the RNase Z family.</text>
</comment>
<accession>B2S457</accession>
<reference key="1">
    <citation type="journal article" date="2008" name="BMC Microbiol.">
        <title>Complete genome sequence of Treponema pallidum ssp. pallidum strain SS14 determined with oligonucleotide arrays.</title>
        <authorList>
            <person name="Matejkova P."/>
            <person name="Strouhal M."/>
            <person name="Smajs D."/>
            <person name="Norris S.J."/>
            <person name="Palzkill T."/>
            <person name="Petrosino J.F."/>
            <person name="Sodergren E."/>
            <person name="Norton J.E."/>
            <person name="Singh J."/>
            <person name="Richmond T.A."/>
            <person name="Molla M.N."/>
            <person name="Albert T.J."/>
            <person name="Weinstock G.M."/>
        </authorList>
    </citation>
    <scope>NUCLEOTIDE SEQUENCE [LARGE SCALE GENOMIC DNA]</scope>
    <source>
        <strain>SS14</strain>
    </source>
</reference>
<organism>
    <name type="scientific">Treponema pallidum subsp. pallidum (strain SS14)</name>
    <dbReference type="NCBI Taxonomy" id="455434"/>
    <lineage>
        <taxon>Bacteria</taxon>
        <taxon>Pseudomonadati</taxon>
        <taxon>Spirochaetota</taxon>
        <taxon>Spirochaetia</taxon>
        <taxon>Spirochaetales</taxon>
        <taxon>Treponemataceae</taxon>
        <taxon>Treponema</taxon>
    </lineage>
</organism>
<sequence>MHMNLEAFILGCGGMVPLPHRHLTSVLLRREGELFLFDAGEGTQVSLRRLSLRWKKISAIFISHTHADHITGLPGLLMLSSQVARSEPLYIIGPPRTAEYVETSRRILDMYINYEIIVKEVIEPQVVYRGKDFQVRCFCLDHTKPCMGYTLEEQDRPGSFDPRAAQDLHVPCGALWSQLQSGVAVQSAQGVTVYPEQVMGPARPGRKVSFVTDTKYLQSIAAEVRNSDFFVCEGMFEKGMEKDAAEKKHMTCVQAATIARDARVRLMALIHYSPRYTDHELKRLLKEAQRVFPHTILSRDQLMVPIAYRE</sequence>